<sequence length="158" mass="17038">MSASEAQVIARALFDSLTGAALQALHTATSINGEVTTERLLAALPADAPREVRNLILALGKEGNLDRLPAVVAAFEQMTRRGGARPLTGEVTSAVELSPQQRERITEQLKARYGPDLEVRFSVDESLIGGLIIRIGDQVLDTSLRTRMAAIQRNMMTG</sequence>
<accession>A7NIR2</accession>
<dbReference type="EMBL" id="CP000804">
    <property type="protein sequence ID" value="ABU57365.1"/>
    <property type="molecule type" value="Genomic_DNA"/>
</dbReference>
<dbReference type="RefSeq" id="WP_012119795.1">
    <property type="nucleotide sequence ID" value="NC_009767.1"/>
</dbReference>
<dbReference type="SMR" id="A7NIR2"/>
<dbReference type="STRING" id="383372.Rcas_1268"/>
<dbReference type="KEGG" id="rca:Rcas_1268"/>
<dbReference type="eggNOG" id="COG0712">
    <property type="taxonomic scope" value="Bacteria"/>
</dbReference>
<dbReference type="HOGENOM" id="CLU_085114_3_0_0"/>
<dbReference type="OrthoDB" id="9802471at2"/>
<dbReference type="Proteomes" id="UP000000263">
    <property type="component" value="Chromosome"/>
</dbReference>
<dbReference type="GO" id="GO:0005886">
    <property type="term" value="C:plasma membrane"/>
    <property type="evidence" value="ECO:0007669"/>
    <property type="project" value="UniProtKB-SubCell"/>
</dbReference>
<dbReference type="GO" id="GO:0045259">
    <property type="term" value="C:proton-transporting ATP synthase complex"/>
    <property type="evidence" value="ECO:0007669"/>
    <property type="project" value="UniProtKB-KW"/>
</dbReference>
<dbReference type="GO" id="GO:0046933">
    <property type="term" value="F:proton-transporting ATP synthase activity, rotational mechanism"/>
    <property type="evidence" value="ECO:0007669"/>
    <property type="project" value="UniProtKB-UniRule"/>
</dbReference>
<dbReference type="HAMAP" id="MF_01416">
    <property type="entry name" value="ATP_synth_delta_bact"/>
    <property type="match status" value="1"/>
</dbReference>
<dbReference type="InterPro" id="IPR020781">
    <property type="entry name" value="ATPase_OSCP/d_CS"/>
</dbReference>
<dbReference type="InterPro" id="IPR000711">
    <property type="entry name" value="ATPase_OSCP/dsu"/>
</dbReference>
<dbReference type="NCBIfam" id="TIGR01145">
    <property type="entry name" value="ATP_synt_delta"/>
    <property type="match status" value="1"/>
</dbReference>
<dbReference type="PANTHER" id="PTHR11910">
    <property type="entry name" value="ATP SYNTHASE DELTA CHAIN"/>
    <property type="match status" value="1"/>
</dbReference>
<dbReference type="Pfam" id="PF00213">
    <property type="entry name" value="OSCP"/>
    <property type="match status" value="1"/>
</dbReference>
<dbReference type="PRINTS" id="PR00125">
    <property type="entry name" value="ATPASEDELTA"/>
</dbReference>
<dbReference type="PROSITE" id="PS00389">
    <property type="entry name" value="ATPASE_DELTA"/>
    <property type="match status" value="1"/>
</dbReference>
<protein>
    <recommendedName>
        <fullName evidence="1">ATP synthase subunit delta</fullName>
    </recommendedName>
    <alternativeName>
        <fullName evidence="1">ATP synthase F(1) sector subunit delta</fullName>
    </alternativeName>
    <alternativeName>
        <fullName evidence="1">F-type ATPase subunit delta</fullName>
        <shortName evidence="1">F-ATPase subunit delta</shortName>
    </alternativeName>
</protein>
<evidence type="ECO:0000255" key="1">
    <source>
        <dbReference type="HAMAP-Rule" id="MF_01416"/>
    </source>
</evidence>
<reference key="1">
    <citation type="submission" date="2007-08" db="EMBL/GenBank/DDBJ databases">
        <title>Complete sequence of Roseiflexus castenholzii DSM 13941.</title>
        <authorList>
            <consortium name="US DOE Joint Genome Institute"/>
            <person name="Copeland A."/>
            <person name="Lucas S."/>
            <person name="Lapidus A."/>
            <person name="Barry K."/>
            <person name="Glavina del Rio T."/>
            <person name="Dalin E."/>
            <person name="Tice H."/>
            <person name="Pitluck S."/>
            <person name="Thompson L.S."/>
            <person name="Brettin T."/>
            <person name="Bruce D."/>
            <person name="Detter J.C."/>
            <person name="Han C."/>
            <person name="Tapia R."/>
            <person name="Schmutz J."/>
            <person name="Larimer F."/>
            <person name="Land M."/>
            <person name="Hauser L."/>
            <person name="Kyrpides N."/>
            <person name="Mikhailova N."/>
            <person name="Bryant D.A."/>
            <person name="Hanada S."/>
            <person name="Tsukatani Y."/>
            <person name="Richardson P."/>
        </authorList>
    </citation>
    <scope>NUCLEOTIDE SEQUENCE [LARGE SCALE GENOMIC DNA]</scope>
    <source>
        <strain>DSM 13941 / HLO8</strain>
    </source>
</reference>
<feature type="chain" id="PRO_0000382148" description="ATP synthase subunit delta">
    <location>
        <begin position="1"/>
        <end position="158"/>
    </location>
</feature>
<gene>
    <name evidence="1" type="primary">atpH</name>
    <name type="ordered locus">Rcas_1268</name>
</gene>
<proteinExistence type="inferred from homology"/>
<name>ATPD_ROSCS</name>
<comment type="function">
    <text evidence="1">F(1)F(0) ATP synthase produces ATP from ADP in the presence of a proton or sodium gradient. F-type ATPases consist of two structural domains, F(1) containing the extramembraneous catalytic core and F(0) containing the membrane proton channel, linked together by a central stalk and a peripheral stalk. During catalysis, ATP synthesis in the catalytic domain of F(1) is coupled via a rotary mechanism of the central stalk subunits to proton translocation.</text>
</comment>
<comment type="function">
    <text evidence="1">This protein is part of the stalk that links CF(0) to CF(1). It either transmits conformational changes from CF(0) to CF(1) or is implicated in proton conduction.</text>
</comment>
<comment type="subunit">
    <text evidence="1">F-type ATPases have 2 components, F(1) - the catalytic core - and F(0) - the membrane proton channel. F(1) has five subunits: alpha(3), beta(3), gamma(1), delta(1), epsilon(1). F(0) has three main subunits: a(1), b(2) and c(10-14). The alpha and beta chains form an alternating ring which encloses part of the gamma chain. F(1) is attached to F(0) by a central stalk formed by the gamma and epsilon chains, while a peripheral stalk is formed by the delta and b chains.</text>
</comment>
<comment type="subcellular location">
    <subcellularLocation>
        <location evidence="1">Cell membrane</location>
        <topology evidence="1">Peripheral membrane protein</topology>
    </subcellularLocation>
</comment>
<comment type="similarity">
    <text evidence="1">Belongs to the ATPase delta chain family.</text>
</comment>
<organism>
    <name type="scientific">Roseiflexus castenholzii (strain DSM 13941 / HLO8)</name>
    <dbReference type="NCBI Taxonomy" id="383372"/>
    <lineage>
        <taxon>Bacteria</taxon>
        <taxon>Bacillati</taxon>
        <taxon>Chloroflexota</taxon>
        <taxon>Chloroflexia</taxon>
        <taxon>Chloroflexales</taxon>
        <taxon>Roseiflexineae</taxon>
        <taxon>Roseiflexaceae</taxon>
        <taxon>Roseiflexus</taxon>
    </lineage>
</organism>
<keyword id="KW-0066">ATP synthesis</keyword>
<keyword id="KW-1003">Cell membrane</keyword>
<keyword id="KW-0139">CF(1)</keyword>
<keyword id="KW-0375">Hydrogen ion transport</keyword>
<keyword id="KW-0406">Ion transport</keyword>
<keyword id="KW-0472">Membrane</keyword>
<keyword id="KW-1185">Reference proteome</keyword>
<keyword id="KW-0813">Transport</keyword>